<comment type="function">
    <text evidence="1">Catalyzes the condensation of pantoate with beta-alanine in an ATP-dependent reaction via a pantoyl-adenylate intermediate.</text>
</comment>
<comment type="catalytic activity">
    <reaction evidence="1">
        <text>(R)-pantoate + beta-alanine + ATP = (R)-pantothenate + AMP + diphosphate + H(+)</text>
        <dbReference type="Rhea" id="RHEA:10912"/>
        <dbReference type="ChEBI" id="CHEBI:15378"/>
        <dbReference type="ChEBI" id="CHEBI:15980"/>
        <dbReference type="ChEBI" id="CHEBI:29032"/>
        <dbReference type="ChEBI" id="CHEBI:30616"/>
        <dbReference type="ChEBI" id="CHEBI:33019"/>
        <dbReference type="ChEBI" id="CHEBI:57966"/>
        <dbReference type="ChEBI" id="CHEBI:456215"/>
        <dbReference type="EC" id="6.3.2.1"/>
    </reaction>
</comment>
<comment type="pathway">
    <text evidence="1">Cofactor biosynthesis; (R)-pantothenate biosynthesis; (R)-pantothenate from (R)-pantoate and beta-alanine: step 1/1.</text>
</comment>
<comment type="subunit">
    <text evidence="1">Homodimer.</text>
</comment>
<comment type="subcellular location">
    <subcellularLocation>
        <location evidence="1">Cytoplasm</location>
    </subcellularLocation>
</comment>
<comment type="miscellaneous">
    <text evidence="1">The reaction proceeds by a bi uni uni bi ping pong mechanism.</text>
</comment>
<comment type="similarity">
    <text evidence="1">Belongs to the pantothenate synthetase family.</text>
</comment>
<dbReference type="EC" id="6.3.2.1" evidence="1"/>
<dbReference type="EMBL" id="CP000138">
    <property type="protein sequence ID" value="ABC93895.1"/>
    <property type="molecule type" value="Genomic_DNA"/>
</dbReference>
<dbReference type="RefSeq" id="WP_011428313.1">
    <property type="nucleotide sequence ID" value="NC_007766.1"/>
</dbReference>
<dbReference type="SMR" id="Q2JZU1"/>
<dbReference type="KEGG" id="ret:RHE_PF00001"/>
<dbReference type="HOGENOM" id="CLU_047148_0_0_5"/>
<dbReference type="OrthoDB" id="9773087at2"/>
<dbReference type="UniPathway" id="UPA00028">
    <property type="reaction ID" value="UER00005"/>
</dbReference>
<dbReference type="Proteomes" id="UP000001936">
    <property type="component" value="Plasmid p42f"/>
</dbReference>
<dbReference type="GO" id="GO:0005829">
    <property type="term" value="C:cytosol"/>
    <property type="evidence" value="ECO:0007669"/>
    <property type="project" value="TreeGrafter"/>
</dbReference>
<dbReference type="GO" id="GO:0005524">
    <property type="term" value="F:ATP binding"/>
    <property type="evidence" value="ECO:0007669"/>
    <property type="project" value="UniProtKB-KW"/>
</dbReference>
<dbReference type="GO" id="GO:0004592">
    <property type="term" value="F:pantoate-beta-alanine ligase activity"/>
    <property type="evidence" value="ECO:0007669"/>
    <property type="project" value="UniProtKB-UniRule"/>
</dbReference>
<dbReference type="GO" id="GO:0015940">
    <property type="term" value="P:pantothenate biosynthetic process"/>
    <property type="evidence" value="ECO:0007669"/>
    <property type="project" value="UniProtKB-UniRule"/>
</dbReference>
<dbReference type="CDD" id="cd00560">
    <property type="entry name" value="PanC"/>
    <property type="match status" value="1"/>
</dbReference>
<dbReference type="FunFam" id="3.40.50.620:FF:000013">
    <property type="entry name" value="Pantothenate synthetase"/>
    <property type="match status" value="1"/>
</dbReference>
<dbReference type="Gene3D" id="3.40.50.620">
    <property type="entry name" value="HUPs"/>
    <property type="match status" value="1"/>
</dbReference>
<dbReference type="Gene3D" id="3.30.1300.10">
    <property type="entry name" value="Pantoate-beta-alanine ligase, C-terminal domain"/>
    <property type="match status" value="1"/>
</dbReference>
<dbReference type="HAMAP" id="MF_00158">
    <property type="entry name" value="PanC"/>
    <property type="match status" value="1"/>
</dbReference>
<dbReference type="InterPro" id="IPR004821">
    <property type="entry name" value="Cyt_trans-like"/>
</dbReference>
<dbReference type="InterPro" id="IPR003721">
    <property type="entry name" value="Pantoate_ligase"/>
</dbReference>
<dbReference type="InterPro" id="IPR042176">
    <property type="entry name" value="Pantoate_ligase_C"/>
</dbReference>
<dbReference type="InterPro" id="IPR014729">
    <property type="entry name" value="Rossmann-like_a/b/a_fold"/>
</dbReference>
<dbReference type="NCBIfam" id="TIGR00125">
    <property type="entry name" value="cyt_tran_rel"/>
    <property type="match status" value="1"/>
</dbReference>
<dbReference type="NCBIfam" id="TIGR00018">
    <property type="entry name" value="panC"/>
    <property type="match status" value="1"/>
</dbReference>
<dbReference type="PANTHER" id="PTHR21299">
    <property type="entry name" value="CYTIDYLATE KINASE/PANTOATE-BETA-ALANINE LIGASE"/>
    <property type="match status" value="1"/>
</dbReference>
<dbReference type="PANTHER" id="PTHR21299:SF1">
    <property type="entry name" value="PANTOATE--BETA-ALANINE LIGASE"/>
    <property type="match status" value="1"/>
</dbReference>
<dbReference type="Pfam" id="PF02569">
    <property type="entry name" value="Pantoate_ligase"/>
    <property type="match status" value="1"/>
</dbReference>
<dbReference type="SUPFAM" id="SSF52374">
    <property type="entry name" value="Nucleotidylyl transferase"/>
    <property type="match status" value="1"/>
</dbReference>
<protein>
    <recommendedName>
        <fullName evidence="1">Pantothenate synthetase</fullName>
        <shortName evidence="1">PS</shortName>
        <ecNumber evidence="1">6.3.2.1</ecNumber>
    </recommendedName>
    <alternativeName>
        <fullName evidence="1">Pantoate--beta-alanine ligase</fullName>
    </alternativeName>
    <alternativeName>
        <fullName evidence="1">Pantoate-activating enzyme</fullName>
    </alternativeName>
</protein>
<accession>Q2JZU1</accession>
<name>PANC_RHIEC</name>
<geneLocation type="plasmid">
    <name>p42f</name>
</geneLocation>
<gene>
    <name evidence="1" type="primary">panC</name>
    <name type="ordered locus">RHE_PF00001</name>
</gene>
<evidence type="ECO:0000255" key="1">
    <source>
        <dbReference type="HAMAP-Rule" id="MF_00158"/>
    </source>
</evidence>
<organism>
    <name type="scientific">Rhizobium etli (strain ATCC 51251 / DSM 11541 / JCM 21823 / NBRC 15573 / CFN 42)</name>
    <dbReference type="NCBI Taxonomy" id="347834"/>
    <lineage>
        <taxon>Bacteria</taxon>
        <taxon>Pseudomonadati</taxon>
        <taxon>Pseudomonadota</taxon>
        <taxon>Alphaproteobacteria</taxon>
        <taxon>Hyphomicrobiales</taxon>
        <taxon>Rhizobiaceae</taxon>
        <taxon>Rhizobium/Agrobacterium group</taxon>
        <taxon>Rhizobium</taxon>
    </lineage>
</organism>
<feature type="chain" id="PRO_0000305525" description="Pantothenate synthetase">
    <location>
        <begin position="1"/>
        <end position="297"/>
    </location>
</feature>
<feature type="active site" description="Proton donor" evidence="1">
    <location>
        <position position="37"/>
    </location>
</feature>
<feature type="binding site" evidence="1">
    <location>
        <begin position="30"/>
        <end position="37"/>
    </location>
    <ligand>
        <name>ATP</name>
        <dbReference type="ChEBI" id="CHEBI:30616"/>
    </ligand>
</feature>
<feature type="binding site" evidence="1">
    <location>
        <position position="61"/>
    </location>
    <ligand>
        <name>(R)-pantoate</name>
        <dbReference type="ChEBI" id="CHEBI:15980"/>
    </ligand>
</feature>
<feature type="binding site" evidence="1">
    <location>
        <position position="61"/>
    </location>
    <ligand>
        <name>beta-alanine</name>
        <dbReference type="ChEBI" id="CHEBI:57966"/>
    </ligand>
</feature>
<feature type="binding site" evidence="1">
    <location>
        <begin position="147"/>
        <end position="150"/>
    </location>
    <ligand>
        <name>ATP</name>
        <dbReference type="ChEBI" id="CHEBI:30616"/>
    </ligand>
</feature>
<feature type="binding site" evidence="1">
    <location>
        <position position="153"/>
    </location>
    <ligand>
        <name>(R)-pantoate</name>
        <dbReference type="ChEBI" id="CHEBI:15980"/>
    </ligand>
</feature>
<feature type="binding site" evidence="1">
    <location>
        <position position="176"/>
    </location>
    <ligand>
        <name>ATP</name>
        <dbReference type="ChEBI" id="CHEBI:30616"/>
    </ligand>
</feature>
<feature type="binding site" evidence="1">
    <location>
        <begin position="184"/>
        <end position="187"/>
    </location>
    <ligand>
        <name>ATP</name>
        <dbReference type="ChEBI" id="CHEBI:30616"/>
    </ligand>
</feature>
<reference key="1">
    <citation type="journal article" date="2006" name="Proc. Natl. Acad. Sci. U.S.A.">
        <title>The partitioned Rhizobium etli genome: genetic and metabolic redundancy in seven interacting replicons.</title>
        <authorList>
            <person name="Gonzalez V."/>
            <person name="Santamaria R.I."/>
            <person name="Bustos P."/>
            <person name="Hernandez-Gonzalez I."/>
            <person name="Medrano-Soto A."/>
            <person name="Moreno-Hagelsieb G."/>
            <person name="Janga S.C."/>
            <person name="Ramirez M.A."/>
            <person name="Jimenez-Jacinto V."/>
            <person name="Collado-Vides J."/>
            <person name="Davila G."/>
        </authorList>
    </citation>
    <scope>NUCLEOTIDE SEQUENCE [LARGE SCALE GENOMIC DNA]</scope>
    <source>
        <strain>ATCC 51251 / DSM 11541 / JCM 21823 / NBRC 15573 / CFN 42</strain>
    </source>
</reference>
<keyword id="KW-0067">ATP-binding</keyword>
<keyword id="KW-0963">Cytoplasm</keyword>
<keyword id="KW-0436">Ligase</keyword>
<keyword id="KW-0547">Nucleotide-binding</keyword>
<keyword id="KW-0566">Pantothenate biosynthesis</keyword>
<keyword id="KW-0614">Plasmid</keyword>
<keyword id="KW-1185">Reference proteome</keyword>
<proteinExistence type="inferred from homology"/>
<sequence>MRVFSSIDELRHTLDALKRQGRNVGLVPTMGYLHAGHMELVARARAENDIVVVSIFVNPLQFGPAEDLSKYPRDLERDAAMLKQAGVNFLFAPGVGDMYPRPMKTVVDIPDLGRELEGAVRPGHFAGVATVVSKLFNIVQPQTAYFGEKDYQQVVIIKRMVEDLAVPVRVISVPTVRDADGLALSSRNVYLSLEERRAAVIVPQTLDEAERLIGDGLTDAKTLEAKLTEFLGREPLARPEVVAVRDATTLEPVTSIGGSVVVALFVRVGSTRLLDNRVIGDNRTIGGRNQPGKGVTK</sequence>